<accession>Q8Y9P2</accession>
<comment type="function">
    <text evidence="1">Specifically methylates position 2 of adenine 2503 in 23S rRNA and position 2 of adenine 37 in tRNAs.</text>
</comment>
<comment type="catalytic activity">
    <reaction evidence="1">
        <text>adenosine(2503) in 23S rRNA + 2 reduced [2Fe-2S]-[ferredoxin] + 2 S-adenosyl-L-methionine = 2-methyladenosine(2503) in 23S rRNA + 5'-deoxyadenosine + L-methionine + 2 oxidized [2Fe-2S]-[ferredoxin] + S-adenosyl-L-homocysteine</text>
        <dbReference type="Rhea" id="RHEA:42916"/>
        <dbReference type="Rhea" id="RHEA-COMP:10000"/>
        <dbReference type="Rhea" id="RHEA-COMP:10001"/>
        <dbReference type="Rhea" id="RHEA-COMP:10152"/>
        <dbReference type="Rhea" id="RHEA-COMP:10282"/>
        <dbReference type="ChEBI" id="CHEBI:17319"/>
        <dbReference type="ChEBI" id="CHEBI:33737"/>
        <dbReference type="ChEBI" id="CHEBI:33738"/>
        <dbReference type="ChEBI" id="CHEBI:57844"/>
        <dbReference type="ChEBI" id="CHEBI:57856"/>
        <dbReference type="ChEBI" id="CHEBI:59789"/>
        <dbReference type="ChEBI" id="CHEBI:74411"/>
        <dbReference type="ChEBI" id="CHEBI:74497"/>
        <dbReference type="EC" id="2.1.1.192"/>
    </reaction>
</comment>
<comment type="catalytic activity">
    <reaction evidence="1">
        <text>adenosine(37) in tRNA + 2 reduced [2Fe-2S]-[ferredoxin] + 2 S-adenosyl-L-methionine = 2-methyladenosine(37) in tRNA + 5'-deoxyadenosine + L-methionine + 2 oxidized [2Fe-2S]-[ferredoxin] + S-adenosyl-L-homocysteine</text>
        <dbReference type="Rhea" id="RHEA:43332"/>
        <dbReference type="Rhea" id="RHEA-COMP:10000"/>
        <dbReference type="Rhea" id="RHEA-COMP:10001"/>
        <dbReference type="Rhea" id="RHEA-COMP:10162"/>
        <dbReference type="Rhea" id="RHEA-COMP:10485"/>
        <dbReference type="ChEBI" id="CHEBI:17319"/>
        <dbReference type="ChEBI" id="CHEBI:33737"/>
        <dbReference type="ChEBI" id="CHEBI:33738"/>
        <dbReference type="ChEBI" id="CHEBI:57844"/>
        <dbReference type="ChEBI" id="CHEBI:57856"/>
        <dbReference type="ChEBI" id="CHEBI:59789"/>
        <dbReference type="ChEBI" id="CHEBI:74411"/>
        <dbReference type="ChEBI" id="CHEBI:74497"/>
        <dbReference type="EC" id="2.1.1.192"/>
    </reaction>
</comment>
<comment type="cofactor">
    <cofactor evidence="1">
        <name>[4Fe-4S] cluster</name>
        <dbReference type="ChEBI" id="CHEBI:49883"/>
    </cofactor>
    <text evidence="1">Binds 1 [4Fe-4S] cluster. The cluster is coordinated with 3 cysteines and an exchangeable S-adenosyl-L-methionine.</text>
</comment>
<comment type="subcellular location">
    <subcellularLocation>
        <location evidence="1">Cytoplasm</location>
    </subcellularLocation>
</comment>
<comment type="miscellaneous">
    <text evidence="1">Reaction proceeds by a ping-pong mechanism involving intermediate methylation of a conserved cysteine residue.</text>
</comment>
<comment type="similarity">
    <text evidence="1">Belongs to the radical SAM superfamily. RlmN family.</text>
</comment>
<proteinExistence type="inferred from homology"/>
<evidence type="ECO:0000255" key="1">
    <source>
        <dbReference type="HAMAP-Rule" id="MF_01849"/>
    </source>
</evidence>
<evidence type="ECO:0000255" key="2">
    <source>
        <dbReference type="PROSITE-ProRule" id="PRU01266"/>
    </source>
</evidence>
<dbReference type="EC" id="2.1.1.192" evidence="1"/>
<dbReference type="EMBL" id="AL591975">
    <property type="protein sequence ID" value="CAC98561.1"/>
    <property type="molecule type" value="Genomic_DNA"/>
</dbReference>
<dbReference type="PIR" id="AC1135">
    <property type="entry name" value="AC1135"/>
</dbReference>
<dbReference type="RefSeq" id="NP_464010.1">
    <property type="nucleotide sequence ID" value="NC_003210.1"/>
</dbReference>
<dbReference type="RefSeq" id="WP_010989487.1">
    <property type="nucleotide sequence ID" value="NZ_CP149495.1"/>
</dbReference>
<dbReference type="SMR" id="Q8Y9P2"/>
<dbReference type="STRING" id="169963.gene:17593133"/>
<dbReference type="PaxDb" id="169963-lmo0482"/>
<dbReference type="EnsemblBacteria" id="CAC98561">
    <property type="protein sequence ID" value="CAC98561"/>
    <property type="gene ID" value="CAC98561"/>
</dbReference>
<dbReference type="GeneID" id="986229"/>
<dbReference type="KEGG" id="lmo:lmo0482"/>
<dbReference type="PATRIC" id="fig|169963.11.peg.501"/>
<dbReference type="eggNOG" id="COG0820">
    <property type="taxonomic scope" value="Bacteria"/>
</dbReference>
<dbReference type="HOGENOM" id="CLU_029101_0_1_9"/>
<dbReference type="OrthoDB" id="9793973at2"/>
<dbReference type="PhylomeDB" id="Q8Y9P2"/>
<dbReference type="BioCyc" id="LMON169963:LMO0482-MONOMER"/>
<dbReference type="Proteomes" id="UP000000817">
    <property type="component" value="Chromosome"/>
</dbReference>
<dbReference type="GO" id="GO:0005737">
    <property type="term" value="C:cytoplasm"/>
    <property type="evidence" value="ECO:0007669"/>
    <property type="project" value="UniProtKB-SubCell"/>
</dbReference>
<dbReference type="GO" id="GO:0051539">
    <property type="term" value="F:4 iron, 4 sulfur cluster binding"/>
    <property type="evidence" value="ECO:0007669"/>
    <property type="project" value="UniProtKB-UniRule"/>
</dbReference>
<dbReference type="GO" id="GO:0046872">
    <property type="term" value="F:metal ion binding"/>
    <property type="evidence" value="ECO:0007669"/>
    <property type="project" value="UniProtKB-KW"/>
</dbReference>
<dbReference type="GO" id="GO:0070040">
    <property type="term" value="F:rRNA (adenine(2503)-C2-)-methyltransferase activity"/>
    <property type="evidence" value="ECO:0007669"/>
    <property type="project" value="UniProtKB-UniRule"/>
</dbReference>
<dbReference type="GO" id="GO:0019843">
    <property type="term" value="F:rRNA binding"/>
    <property type="evidence" value="ECO:0007669"/>
    <property type="project" value="UniProtKB-UniRule"/>
</dbReference>
<dbReference type="GO" id="GO:0002935">
    <property type="term" value="F:tRNA (adenine(37)-C2)-methyltransferase activity"/>
    <property type="evidence" value="ECO:0007669"/>
    <property type="project" value="UniProtKB-UniRule"/>
</dbReference>
<dbReference type="GO" id="GO:0000049">
    <property type="term" value="F:tRNA binding"/>
    <property type="evidence" value="ECO:0007669"/>
    <property type="project" value="UniProtKB-UniRule"/>
</dbReference>
<dbReference type="GO" id="GO:0070475">
    <property type="term" value="P:rRNA base methylation"/>
    <property type="evidence" value="ECO:0000318"/>
    <property type="project" value="GO_Central"/>
</dbReference>
<dbReference type="GO" id="GO:0030488">
    <property type="term" value="P:tRNA methylation"/>
    <property type="evidence" value="ECO:0000318"/>
    <property type="project" value="GO_Central"/>
</dbReference>
<dbReference type="CDD" id="cd01335">
    <property type="entry name" value="Radical_SAM"/>
    <property type="match status" value="1"/>
</dbReference>
<dbReference type="FunFam" id="3.20.20.70:FF:000014">
    <property type="entry name" value="Probable dual-specificity RNA methyltransferase RlmN"/>
    <property type="match status" value="1"/>
</dbReference>
<dbReference type="Gene3D" id="1.10.150.530">
    <property type="match status" value="1"/>
</dbReference>
<dbReference type="Gene3D" id="3.20.20.70">
    <property type="entry name" value="Aldolase class I"/>
    <property type="match status" value="1"/>
</dbReference>
<dbReference type="HAMAP" id="MF_01849">
    <property type="entry name" value="RNA_methyltr_RlmN"/>
    <property type="match status" value="1"/>
</dbReference>
<dbReference type="InterPro" id="IPR013785">
    <property type="entry name" value="Aldolase_TIM"/>
</dbReference>
<dbReference type="InterPro" id="IPR040072">
    <property type="entry name" value="Methyltransferase_A"/>
</dbReference>
<dbReference type="InterPro" id="IPR048641">
    <property type="entry name" value="RlmN_N"/>
</dbReference>
<dbReference type="InterPro" id="IPR027492">
    <property type="entry name" value="RNA_MTrfase_RlmN"/>
</dbReference>
<dbReference type="InterPro" id="IPR004383">
    <property type="entry name" value="rRNA_lsu_MTrfase_RlmN/Cfr"/>
</dbReference>
<dbReference type="InterPro" id="IPR007197">
    <property type="entry name" value="rSAM"/>
</dbReference>
<dbReference type="NCBIfam" id="TIGR00048">
    <property type="entry name" value="rRNA_mod_RlmN"/>
    <property type="match status" value="1"/>
</dbReference>
<dbReference type="PANTHER" id="PTHR30544">
    <property type="entry name" value="23S RRNA METHYLTRANSFERASE"/>
    <property type="match status" value="1"/>
</dbReference>
<dbReference type="PANTHER" id="PTHR30544:SF5">
    <property type="entry name" value="RADICAL SAM CORE DOMAIN-CONTAINING PROTEIN"/>
    <property type="match status" value="1"/>
</dbReference>
<dbReference type="Pfam" id="PF04055">
    <property type="entry name" value="Radical_SAM"/>
    <property type="match status" value="1"/>
</dbReference>
<dbReference type="Pfam" id="PF21016">
    <property type="entry name" value="RlmN_N"/>
    <property type="match status" value="1"/>
</dbReference>
<dbReference type="PIRSF" id="PIRSF006004">
    <property type="entry name" value="CHP00048"/>
    <property type="match status" value="1"/>
</dbReference>
<dbReference type="SFLD" id="SFLDF00275">
    <property type="entry name" value="adenosine_C2_methyltransferase"/>
    <property type="match status" value="1"/>
</dbReference>
<dbReference type="SFLD" id="SFLDG01062">
    <property type="entry name" value="methyltransferase_(Class_A)"/>
    <property type="match status" value="1"/>
</dbReference>
<dbReference type="SUPFAM" id="SSF102114">
    <property type="entry name" value="Radical SAM enzymes"/>
    <property type="match status" value="1"/>
</dbReference>
<dbReference type="PROSITE" id="PS51918">
    <property type="entry name" value="RADICAL_SAM"/>
    <property type="match status" value="1"/>
</dbReference>
<sequence>MEKSSIYGLTWTNLTEWLEAHGQKKFRATQVWDWLYRKRVKTFEEMSNVPKETIELLTANFVMNTLEEQVVQESTDGTTKYLFKLSDGNLIETVMMKQEYGLSVCVTTQVGCNIGCTFCASGLLKKSRDLTAGEIVEQIMNVQHYLDGRNLEERVSHVVVMGIGEPFDNYDNVMDFLRVINHDKGLAIGARHITVSTSGLAPRIIDFANEDFQVNLAISLHAPNNELRTSIMRINKTYSIEKLMEAIHYYVNKTNRRITFEYIMLKGVNDHKKEALELAALLGEHRHLAYVNLIPYNPVDEHIDYERSTKEDVLAFYDTLKKNGINCVIRREHGTDIDAACGQLRSKQIKRVGVRERMKQKQAAAEE</sequence>
<name>RLMN_LISMO</name>
<feature type="chain" id="PRO_0000350239" description="Probable dual-specificity RNA methyltransferase RlmN">
    <location>
        <begin position="1"/>
        <end position="367"/>
    </location>
</feature>
<feature type="domain" description="Radical SAM core" evidence="2">
    <location>
        <begin position="98"/>
        <end position="326"/>
    </location>
</feature>
<feature type="active site" description="Proton acceptor" evidence="1">
    <location>
        <position position="92"/>
    </location>
</feature>
<feature type="active site" description="S-methylcysteine intermediate" evidence="1">
    <location>
        <position position="341"/>
    </location>
</feature>
<feature type="binding site" evidence="1">
    <location>
        <position position="112"/>
    </location>
    <ligand>
        <name>[4Fe-4S] cluster</name>
        <dbReference type="ChEBI" id="CHEBI:49883"/>
        <note>4Fe-4S-S-AdoMet</note>
    </ligand>
</feature>
<feature type="binding site" evidence="1">
    <location>
        <position position="116"/>
    </location>
    <ligand>
        <name>[4Fe-4S] cluster</name>
        <dbReference type="ChEBI" id="CHEBI:49883"/>
        <note>4Fe-4S-S-AdoMet</note>
    </ligand>
</feature>
<feature type="binding site" evidence="1">
    <location>
        <position position="119"/>
    </location>
    <ligand>
        <name>[4Fe-4S] cluster</name>
        <dbReference type="ChEBI" id="CHEBI:49883"/>
        <note>4Fe-4S-S-AdoMet</note>
    </ligand>
</feature>
<feature type="binding site" evidence="1">
    <location>
        <begin position="164"/>
        <end position="165"/>
    </location>
    <ligand>
        <name>S-adenosyl-L-methionine</name>
        <dbReference type="ChEBI" id="CHEBI:59789"/>
    </ligand>
</feature>
<feature type="binding site" evidence="1">
    <location>
        <position position="196"/>
    </location>
    <ligand>
        <name>S-adenosyl-L-methionine</name>
        <dbReference type="ChEBI" id="CHEBI:59789"/>
    </ligand>
</feature>
<feature type="binding site" evidence="1">
    <location>
        <begin position="219"/>
        <end position="221"/>
    </location>
    <ligand>
        <name>S-adenosyl-L-methionine</name>
        <dbReference type="ChEBI" id="CHEBI:59789"/>
    </ligand>
</feature>
<feature type="binding site" evidence="1">
    <location>
        <position position="297"/>
    </location>
    <ligand>
        <name>S-adenosyl-L-methionine</name>
        <dbReference type="ChEBI" id="CHEBI:59789"/>
    </ligand>
</feature>
<feature type="disulfide bond" description="(transient)" evidence="1">
    <location>
        <begin position="105"/>
        <end position="341"/>
    </location>
</feature>
<gene>
    <name evidence="1" type="primary">rlmN</name>
    <name type="ordered locus">lmo0482</name>
</gene>
<protein>
    <recommendedName>
        <fullName evidence="1">Probable dual-specificity RNA methyltransferase RlmN</fullName>
        <ecNumber evidence="1">2.1.1.192</ecNumber>
    </recommendedName>
    <alternativeName>
        <fullName evidence="1">23S rRNA (adenine(2503)-C(2))-methyltransferase</fullName>
    </alternativeName>
    <alternativeName>
        <fullName evidence="1">23S rRNA m2A2503 methyltransferase</fullName>
    </alternativeName>
    <alternativeName>
        <fullName evidence="1">Ribosomal RNA large subunit methyltransferase N</fullName>
    </alternativeName>
    <alternativeName>
        <fullName evidence="1">tRNA (adenine(37)-C(2))-methyltransferase</fullName>
    </alternativeName>
    <alternativeName>
        <fullName evidence="1">tRNA m2A37 methyltransferase</fullName>
    </alternativeName>
</protein>
<reference key="1">
    <citation type="journal article" date="2001" name="Science">
        <title>Comparative genomics of Listeria species.</title>
        <authorList>
            <person name="Glaser P."/>
            <person name="Frangeul L."/>
            <person name="Buchrieser C."/>
            <person name="Rusniok C."/>
            <person name="Amend A."/>
            <person name="Baquero F."/>
            <person name="Berche P."/>
            <person name="Bloecker H."/>
            <person name="Brandt P."/>
            <person name="Chakraborty T."/>
            <person name="Charbit A."/>
            <person name="Chetouani F."/>
            <person name="Couve E."/>
            <person name="de Daruvar A."/>
            <person name="Dehoux P."/>
            <person name="Domann E."/>
            <person name="Dominguez-Bernal G."/>
            <person name="Duchaud E."/>
            <person name="Durant L."/>
            <person name="Dussurget O."/>
            <person name="Entian K.-D."/>
            <person name="Fsihi H."/>
            <person name="Garcia-del Portillo F."/>
            <person name="Garrido P."/>
            <person name="Gautier L."/>
            <person name="Goebel W."/>
            <person name="Gomez-Lopez N."/>
            <person name="Hain T."/>
            <person name="Hauf J."/>
            <person name="Jackson D."/>
            <person name="Jones L.-M."/>
            <person name="Kaerst U."/>
            <person name="Kreft J."/>
            <person name="Kuhn M."/>
            <person name="Kunst F."/>
            <person name="Kurapkat G."/>
            <person name="Madueno E."/>
            <person name="Maitournam A."/>
            <person name="Mata Vicente J."/>
            <person name="Ng E."/>
            <person name="Nedjari H."/>
            <person name="Nordsiek G."/>
            <person name="Novella S."/>
            <person name="de Pablos B."/>
            <person name="Perez-Diaz J.-C."/>
            <person name="Purcell R."/>
            <person name="Remmel B."/>
            <person name="Rose M."/>
            <person name="Schlueter T."/>
            <person name="Simoes N."/>
            <person name="Tierrez A."/>
            <person name="Vazquez-Boland J.-A."/>
            <person name="Voss H."/>
            <person name="Wehland J."/>
            <person name="Cossart P."/>
        </authorList>
    </citation>
    <scope>NUCLEOTIDE SEQUENCE [LARGE SCALE GENOMIC DNA]</scope>
    <source>
        <strain>ATCC BAA-679 / EGD-e</strain>
    </source>
</reference>
<organism>
    <name type="scientific">Listeria monocytogenes serovar 1/2a (strain ATCC BAA-679 / EGD-e)</name>
    <dbReference type="NCBI Taxonomy" id="169963"/>
    <lineage>
        <taxon>Bacteria</taxon>
        <taxon>Bacillati</taxon>
        <taxon>Bacillota</taxon>
        <taxon>Bacilli</taxon>
        <taxon>Bacillales</taxon>
        <taxon>Listeriaceae</taxon>
        <taxon>Listeria</taxon>
    </lineage>
</organism>
<keyword id="KW-0004">4Fe-4S</keyword>
<keyword id="KW-0963">Cytoplasm</keyword>
<keyword id="KW-1015">Disulfide bond</keyword>
<keyword id="KW-0408">Iron</keyword>
<keyword id="KW-0411">Iron-sulfur</keyword>
<keyword id="KW-0479">Metal-binding</keyword>
<keyword id="KW-0489">Methyltransferase</keyword>
<keyword id="KW-1185">Reference proteome</keyword>
<keyword id="KW-0698">rRNA processing</keyword>
<keyword id="KW-0949">S-adenosyl-L-methionine</keyword>
<keyword id="KW-0808">Transferase</keyword>
<keyword id="KW-0819">tRNA processing</keyword>